<dbReference type="EMBL" id="CR858650">
    <property type="protein sequence ID" value="CAH90864.1"/>
    <property type="molecule type" value="mRNA"/>
</dbReference>
<dbReference type="RefSeq" id="NP_001125494.1">
    <property type="nucleotide sequence ID" value="NM_001132022.1"/>
</dbReference>
<dbReference type="SMR" id="Q5RBJ6"/>
<dbReference type="FunCoup" id="Q5RBJ6">
    <property type="interactions" value="3299"/>
</dbReference>
<dbReference type="STRING" id="9601.ENSPPYP00000009579"/>
<dbReference type="GeneID" id="100172403"/>
<dbReference type="KEGG" id="pon:100172403"/>
<dbReference type="CTD" id="92335"/>
<dbReference type="eggNOG" id="KOG0582">
    <property type="taxonomic scope" value="Eukaryota"/>
</dbReference>
<dbReference type="InParanoid" id="Q5RBJ6"/>
<dbReference type="OrthoDB" id="840771at2759"/>
<dbReference type="Proteomes" id="UP000001595">
    <property type="component" value="Unplaced"/>
</dbReference>
<dbReference type="GO" id="GO:0005737">
    <property type="term" value="C:cytoplasm"/>
    <property type="evidence" value="ECO:0000250"/>
    <property type="project" value="UniProtKB"/>
</dbReference>
<dbReference type="GO" id="GO:0005634">
    <property type="term" value="C:nucleus"/>
    <property type="evidence" value="ECO:0000250"/>
    <property type="project" value="UniProtKB"/>
</dbReference>
<dbReference type="GO" id="GO:1902554">
    <property type="term" value="C:serine/threonine protein kinase complex"/>
    <property type="evidence" value="ECO:0007669"/>
    <property type="project" value="TreeGrafter"/>
</dbReference>
<dbReference type="GO" id="GO:0005524">
    <property type="term" value="F:ATP binding"/>
    <property type="evidence" value="ECO:0007669"/>
    <property type="project" value="InterPro"/>
</dbReference>
<dbReference type="GO" id="GO:0030295">
    <property type="term" value="F:protein kinase activator activity"/>
    <property type="evidence" value="ECO:0000250"/>
    <property type="project" value="UniProtKB"/>
</dbReference>
<dbReference type="GO" id="GO:0004672">
    <property type="term" value="F:protein kinase activity"/>
    <property type="evidence" value="ECO:0007669"/>
    <property type="project" value="InterPro"/>
</dbReference>
<dbReference type="GO" id="GO:0043539">
    <property type="term" value="F:protein serine/threonine kinase activator activity"/>
    <property type="evidence" value="ECO:0007669"/>
    <property type="project" value="InterPro"/>
</dbReference>
<dbReference type="GO" id="GO:0032147">
    <property type="term" value="P:activation of protein kinase activity"/>
    <property type="evidence" value="ECO:0000250"/>
    <property type="project" value="UniProtKB"/>
</dbReference>
<dbReference type="GO" id="GO:0006611">
    <property type="term" value="P:protein export from nucleus"/>
    <property type="evidence" value="ECO:0000250"/>
    <property type="project" value="UniProtKB"/>
</dbReference>
<dbReference type="CDD" id="cd08227">
    <property type="entry name" value="PK_STRAD_alpha"/>
    <property type="match status" value="1"/>
</dbReference>
<dbReference type="FunFam" id="3.30.200.20:FF:000130">
    <property type="entry name" value="STE20-related kinase adapter protein alpha"/>
    <property type="match status" value="1"/>
</dbReference>
<dbReference type="FunFam" id="1.10.510.10:FF:000213">
    <property type="entry name" value="STE20-related kinase adapter protein alpha isoform X2"/>
    <property type="match status" value="1"/>
</dbReference>
<dbReference type="Gene3D" id="3.30.200.20">
    <property type="entry name" value="Phosphorylase Kinase, domain 1"/>
    <property type="match status" value="1"/>
</dbReference>
<dbReference type="Gene3D" id="1.10.510.10">
    <property type="entry name" value="Transferase(Phosphotransferase) domain 1"/>
    <property type="match status" value="1"/>
</dbReference>
<dbReference type="InterPro" id="IPR011009">
    <property type="entry name" value="Kinase-like_dom_sf"/>
</dbReference>
<dbReference type="InterPro" id="IPR000719">
    <property type="entry name" value="Prot_kinase_dom"/>
</dbReference>
<dbReference type="InterPro" id="IPR047173">
    <property type="entry name" value="STRAD_A/B-like"/>
</dbReference>
<dbReference type="PANTHER" id="PTHR48014">
    <property type="entry name" value="SERINE/THREONINE-PROTEIN KINASE FRAY2"/>
    <property type="match status" value="1"/>
</dbReference>
<dbReference type="PANTHER" id="PTHR48014:SF20">
    <property type="entry name" value="STE20-RELATED KINASE ADAPTER PROTEIN ALPHA"/>
    <property type="match status" value="1"/>
</dbReference>
<dbReference type="Pfam" id="PF00069">
    <property type="entry name" value="Pkinase"/>
    <property type="match status" value="1"/>
</dbReference>
<dbReference type="SUPFAM" id="SSF56112">
    <property type="entry name" value="Protein kinase-like (PK-like)"/>
    <property type="match status" value="1"/>
</dbReference>
<dbReference type="PROSITE" id="PS50011">
    <property type="entry name" value="PROTEIN_KINASE_DOM"/>
    <property type="match status" value="1"/>
</dbReference>
<gene>
    <name type="primary">STRADA</name>
    <name type="synonym">STRAD</name>
</gene>
<feature type="chain" id="PRO_0000260038" description="STE20-related kinase adapter protein alpha">
    <location>
        <begin position="1"/>
        <end position="431"/>
    </location>
</feature>
<feature type="domain" description="Protein kinase" evidence="4">
    <location>
        <begin position="69"/>
        <end position="379"/>
    </location>
</feature>
<feature type="region of interest" description="Disordered" evidence="5">
    <location>
        <begin position="310"/>
        <end position="347"/>
    </location>
</feature>
<feature type="compositionally biased region" description="Polar residues" evidence="5">
    <location>
        <begin position="312"/>
        <end position="339"/>
    </location>
</feature>
<feature type="modified residue" description="Phosphoserine" evidence="2">
    <location>
        <position position="2"/>
    </location>
</feature>
<feature type="modified residue" description="Phosphoserine" evidence="2">
    <location>
        <position position="46"/>
    </location>
</feature>
<feature type="modified residue" description="Phosphothreonine; by LKB1" evidence="2">
    <location>
        <position position="329"/>
    </location>
</feature>
<feature type="modified residue" description="Phosphothreonine; by LKB1" evidence="1">
    <location>
        <position position="401"/>
    </location>
</feature>
<feature type="modified residue" description="Phosphothreonine" evidence="2">
    <location>
        <position position="419"/>
    </location>
</feature>
<keyword id="KW-0131">Cell cycle</keyword>
<keyword id="KW-0963">Cytoplasm</keyword>
<keyword id="KW-0539">Nucleus</keyword>
<keyword id="KW-0597">Phosphoprotein</keyword>
<keyword id="KW-1185">Reference proteome</keyword>
<comment type="function">
    <text evidence="1">Pseudokinase which, in complex with CAB39/MO25 (CAB39/MO25alpha or CAB39L/MO25beta), binds to and activates STK11/LKB1. Adopts a closed conformation typical of active protein kinases and binds STK11/LKB1 as a pseudosubstrate, promoting conformational change of STK11/LKB1 in an active conformation (By similarity).</text>
</comment>
<comment type="subunit">
    <text evidence="1">Component of a trimeric complex composed of STK11/LKB1, STRAD (STRADA or STRADB) and CAB39/MO25 (CAB39/MO25alpha or CAB39L/MO25beta): the complex tethers STK11/LKB1 in the cytoplasm and stimulates its catalytic activity.</text>
</comment>
<comment type="subcellular location">
    <subcellularLocation>
        <location evidence="1">Nucleus</location>
    </subcellularLocation>
    <subcellularLocation>
        <location evidence="2">Cytoplasm</location>
    </subcellularLocation>
</comment>
<comment type="domain">
    <text evidence="3">The protein kinase domain is predicted to be catalytically inactive.</text>
</comment>
<comment type="similarity">
    <text evidence="6">Belongs to the protein kinase superfamily. STE Ser/Thr protein kinase family. STE20 subfamily.</text>
</comment>
<evidence type="ECO:0000250" key="1"/>
<evidence type="ECO:0000250" key="2">
    <source>
        <dbReference type="UniProtKB" id="Q7RTN6"/>
    </source>
</evidence>
<evidence type="ECO:0000255" key="3"/>
<evidence type="ECO:0000255" key="4">
    <source>
        <dbReference type="PROSITE-ProRule" id="PRU00159"/>
    </source>
</evidence>
<evidence type="ECO:0000256" key="5">
    <source>
        <dbReference type="SAM" id="MobiDB-lite"/>
    </source>
</evidence>
<evidence type="ECO:0000305" key="6"/>
<evidence type="ECO:0000312" key="7">
    <source>
        <dbReference type="EMBL" id="CAH90864.1"/>
    </source>
</evidence>
<organism>
    <name type="scientific">Pongo abelii</name>
    <name type="common">Sumatran orangutan</name>
    <name type="synonym">Pongo pygmaeus abelii</name>
    <dbReference type="NCBI Taxonomy" id="9601"/>
    <lineage>
        <taxon>Eukaryota</taxon>
        <taxon>Metazoa</taxon>
        <taxon>Chordata</taxon>
        <taxon>Craniata</taxon>
        <taxon>Vertebrata</taxon>
        <taxon>Euteleostomi</taxon>
        <taxon>Mammalia</taxon>
        <taxon>Eutheria</taxon>
        <taxon>Euarchontoglires</taxon>
        <taxon>Primates</taxon>
        <taxon>Haplorrhini</taxon>
        <taxon>Catarrhini</taxon>
        <taxon>Hominidae</taxon>
        <taxon>Pongo</taxon>
    </lineage>
</organism>
<reference evidence="7" key="1">
    <citation type="submission" date="2004-11" db="EMBL/GenBank/DDBJ databases">
        <authorList>
            <consortium name="The German cDNA consortium"/>
        </authorList>
    </citation>
    <scope>NUCLEOTIDE SEQUENCE [LARGE SCALE MRNA]</scope>
    <source>
        <tissue evidence="7">Brain cortex</tissue>
    </source>
</reference>
<name>STRAA_PONAB</name>
<proteinExistence type="evidence at transcript level"/>
<protein>
    <recommendedName>
        <fullName>STE20-related kinase adapter protein alpha</fullName>
        <shortName>STRAD alpha</shortName>
    </recommendedName>
    <alternativeName>
        <fullName>STE20-related adapter protein</fullName>
    </alternativeName>
</protein>
<accession>Q5RBJ6</accession>
<sequence>MSFLVSKPERIRRWVSEKFIVEGLRDLELFGEQPPGDTRRKTNDASSESIAPFSKQEVMGSFLPEGGCYELLTVIGKGFEDLMTVNLARYKPTGEYVTVRRINLEACSNEMVTFLQGELHVSKLFNHPNIVPYRATFIADNELWVVTSFMAYGSAKDLICTHFMDGMNELAIAYILQGVLKALDYIHHMGYVHRSVKASHILISVDGKVYLSGLRSNLSMISHGQRQRVVHDFPKYSIKVLPWLSPEVLQQNLQGYDAKSDIYSVGITACELANGHVPFKDMPATQTLLEKLNGTVPCLLDTSTIPAEELTMSPSRSVANSGLSDSLTTSTPRPSNGDSPSHPYHRTFSPHFHHFVEQCLQRNPDARPSASTLLNHSFFKQIKRRASEALPELLRPVTPITNFEGSQSQDHSGIFGLVTNLEELEVDDWEF</sequence>